<reference key="1">
    <citation type="submission" date="2008-05" db="EMBL/GenBank/DDBJ databases">
        <title>Genome sequence of Clostridium botulinum Ba4 strain 657.</title>
        <authorList>
            <person name="Shrivastava S."/>
            <person name="Brown J.L."/>
            <person name="Bruce D."/>
            <person name="Detter C."/>
            <person name="Munk C."/>
            <person name="Smith L.A."/>
            <person name="Smith T.J."/>
            <person name="Sutton G."/>
            <person name="Brettin T.S."/>
        </authorList>
    </citation>
    <scope>NUCLEOTIDE SEQUENCE [LARGE SCALE GENOMIC DNA]</scope>
    <source>
        <strain>657 / Type Ba4</strain>
    </source>
</reference>
<feature type="chain" id="PRO_1000213028" description="ATP synthase gamma chain">
    <location>
        <begin position="1"/>
        <end position="282"/>
    </location>
</feature>
<comment type="function">
    <text evidence="1">Produces ATP from ADP in the presence of a proton gradient across the membrane. The gamma chain is believed to be important in regulating ATPase activity and the flow of protons through the CF(0) complex.</text>
</comment>
<comment type="subunit">
    <text evidence="1">F-type ATPases have 2 components, CF(1) - the catalytic core - and CF(0) - the membrane proton channel. CF(1) has five subunits: alpha(3), beta(3), gamma(1), delta(1), epsilon(1). CF(0) has three main subunits: a, b and c.</text>
</comment>
<comment type="subcellular location">
    <subcellularLocation>
        <location evidence="1">Cell membrane</location>
        <topology evidence="1">Peripheral membrane protein</topology>
    </subcellularLocation>
</comment>
<comment type="similarity">
    <text evidence="1">Belongs to the ATPase gamma chain family.</text>
</comment>
<name>ATPG_CLOB6</name>
<proteinExistence type="inferred from homology"/>
<evidence type="ECO:0000255" key="1">
    <source>
        <dbReference type="HAMAP-Rule" id="MF_00815"/>
    </source>
</evidence>
<gene>
    <name evidence="1" type="primary">atpG</name>
    <name type="ordered locus">CLJ_B0194</name>
</gene>
<protein>
    <recommendedName>
        <fullName evidence="1">ATP synthase gamma chain</fullName>
    </recommendedName>
    <alternativeName>
        <fullName evidence="1">ATP synthase F1 sector gamma subunit</fullName>
    </alternativeName>
    <alternativeName>
        <fullName evidence="1">F-ATPase gamma subunit</fullName>
    </alternativeName>
</protein>
<accession>C3KYJ2</accession>
<organism>
    <name type="scientific">Clostridium botulinum (strain 657 / Type Ba4)</name>
    <dbReference type="NCBI Taxonomy" id="515621"/>
    <lineage>
        <taxon>Bacteria</taxon>
        <taxon>Bacillati</taxon>
        <taxon>Bacillota</taxon>
        <taxon>Clostridia</taxon>
        <taxon>Eubacteriales</taxon>
        <taxon>Clostridiaceae</taxon>
        <taxon>Clostridium</taxon>
    </lineage>
</organism>
<dbReference type="EMBL" id="CP001083">
    <property type="protein sequence ID" value="ACQ55010.1"/>
    <property type="molecule type" value="Genomic_DNA"/>
</dbReference>
<dbReference type="RefSeq" id="WP_003360551.1">
    <property type="nucleotide sequence ID" value="NC_012658.1"/>
</dbReference>
<dbReference type="SMR" id="C3KYJ2"/>
<dbReference type="KEGG" id="cbi:CLJ_B0194"/>
<dbReference type="HOGENOM" id="CLU_050669_0_1_9"/>
<dbReference type="Proteomes" id="UP000002333">
    <property type="component" value="Chromosome"/>
</dbReference>
<dbReference type="GO" id="GO:0005886">
    <property type="term" value="C:plasma membrane"/>
    <property type="evidence" value="ECO:0007669"/>
    <property type="project" value="UniProtKB-SubCell"/>
</dbReference>
<dbReference type="GO" id="GO:0045259">
    <property type="term" value="C:proton-transporting ATP synthase complex"/>
    <property type="evidence" value="ECO:0007669"/>
    <property type="project" value="UniProtKB-KW"/>
</dbReference>
<dbReference type="GO" id="GO:0005524">
    <property type="term" value="F:ATP binding"/>
    <property type="evidence" value="ECO:0007669"/>
    <property type="project" value="UniProtKB-UniRule"/>
</dbReference>
<dbReference type="GO" id="GO:0046933">
    <property type="term" value="F:proton-transporting ATP synthase activity, rotational mechanism"/>
    <property type="evidence" value="ECO:0007669"/>
    <property type="project" value="UniProtKB-UniRule"/>
</dbReference>
<dbReference type="GO" id="GO:0042777">
    <property type="term" value="P:proton motive force-driven plasma membrane ATP synthesis"/>
    <property type="evidence" value="ECO:0007669"/>
    <property type="project" value="UniProtKB-UniRule"/>
</dbReference>
<dbReference type="CDD" id="cd12151">
    <property type="entry name" value="F1-ATPase_gamma"/>
    <property type="match status" value="1"/>
</dbReference>
<dbReference type="FunFam" id="3.40.1380.10:FF:000012">
    <property type="entry name" value="ATP synthase gamma chain"/>
    <property type="match status" value="1"/>
</dbReference>
<dbReference type="Gene3D" id="3.40.1380.10">
    <property type="match status" value="1"/>
</dbReference>
<dbReference type="Gene3D" id="1.10.287.80">
    <property type="entry name" value="ATP synthase, gamma subunit, helix hairpin domain"/>
    <property type="match status" value="1"/>
</dbReference>
<dbReference type="HAMAP" id="MF_00815">
    <property type="entry name" value="ATP_synth_gamma_bact"/>
    <property type="match status" value="1"/>
</dbReference>
<dbReference type="InterPro" id="IPR035968">
    <property type="entry name" value="ATP_synth_F1_ATPase_gsu"/>
</dbReference>
<dbReference type="InterPro" id="IPR000131">
    <property type="entry name" value="ATP_synth_F1_gsu"/>
</dbReference>
<dbReference type="InterPro" id="IPR023632">
    <property type="entry name" value="ATP_synth_F1_gsu_CS"/>
</dbReference>
<dbReference type="NCBIfam" id="TIGR01146">
    <property type="entry name" value="ATPsyn_F1gamma"/>
    <property type="match status" value="1"/>
</dbReference>
<dbReference type="PANTHER" id="PTHR11693">
    <property type="entry name" value="ATP SYNTHASE GAMMA CHAIN"/>
    <property type="match status" value="1"/>
</dbReference>
<dbReference type="PANTHER" id="PTHR11693:SF22">
    <property type="entry name" value="ATP SYNTHASE SUBUNIT GAMMA, MITOCHONDRIAL"/>
    <property type="match status" value="1"/>
</dbReference>
<dbReference type="Pfam" id="PF00231">
    <property type="entry name" value="ATP-synt"/>
    <property type="match status" value="1"/>
</dbReference>
<dbReference type="PRINTS" id="PR00126">
    <property type="entry name" value="ATPASEGAMMA"/>
</dbReference>
<dbReference type="SUPFAM" id="SSF52943">
    <property type="entry name" value="ATP synthase (F1-ATPase), gamma subunit"/>
    <property type="match status" value="1"/>
</dbReference>
<dbReference type="PROSITE" id="PS00153">
    <property type="entry name" value="ATPASE_GAMMA"/>
    <property type="match status" value="1"/>
</dbReference>
<sequence length="282" mass="31947">MAGAGLIGIRRRIKSVTNIRKITKAMGLVSTAKLRKARVNLEINKKYYNEYKIILKDIINFIEDRNIYIDGNGSHKKLYVIFTSDSGLCGSFNINIINNVINEIKEDKENSLVIVIGQKGRMYLKKLGINTLAEYIEIPDVPTTKEARTIAKNIIKLYSSKEVGEVFLVYSEFYSPVKQQVLINKILPFTKENKSDNKYIEFNPPVTRFMDEILENYLKATILNCFSNSKASENGSRMTAMNGATDNANDLLDNLDLQFNRLRQSAITQEISEIVGGAEAQR</sequence>
<keyword id="KW-0066">ATP synthesis</keyword>
<keyword id="KW-1003">Cell membrane</keyword>
<keyword id="KW-0139">CF(1)</keyword>
<keyword id="KW-0375">Hydrogen ion transport</keyword>
<keyword id="KW-0406">Ion transport</keyword>
<keyword id="KW-0472">Membrane</keyword>
<keyword id="KW-0813">Transport</keyword>